<proteinExistence type="inferred from homology"/>
<gene>
    <name evidence="1" type="primary">gatB</name>
    <name type="ordered locus">Mfla_2488</name>
</gene>
<reference key="1">
    <citation type="submission" date="2006-03" db="EMBL/GenBank/DDBJ databases">
        <title>Complete sequence of Methylobacillus flagellatus KT.</title>
        <authorList>
            <consortium name="US DOE Joint Genome Institute"/>
            <person name="Copeland A."/>
            <person name="Lucas S."/>
            <person name="Lapidus A."/>
            <person name="Barry K."/>
            <person name="Detter J.C."/>
            <person name="Glavina del Rio T."/>
            <person name="Hammon N."/>
            <person name="Israni S."/>
            <person name="Dalin E."/>
            <person name="Tice H."/>
            <person name="Pitluck S."/>
            <person name="Brettin T."/>
            <person name="Bruce D."/>
            <person name="Han C."/>
            <person name="Tapia R."/>
            <person name="Saunders E."/>
            <person name="Gilna P."/>
            <person name="Schmutz J."/>
            <person name="Larimer F."/>
            <person name="Land M."/>
            <person name="Kyrpides N."/>
            <person name="Anderson I."/>
            <person name="Richardson P."/>
        </authorList>
    </citation>
    <scope>NUCLEOTIDE SEQUENCE [LARGE SCALE GENOMIC DNA]</scope>
    <source>
        <strain>ATCC 51484 / DSM 6875 / VKM B-1610 / KT</strain>
    </source>
</reference>
<comment type="function">
    <text evidence="1">Allows the formation of correctly charged Asn-tRNA(Asn) or Gln-tRNA(Gln) through the transamidation of misacylated Asp-tRNA(Asn) or Glu-tRNA(Gln) in organisms which lack either or both of asparaginyl-tRNA or glutaminyl-tRNA synthetases. The reaction takes place in the presence of glutamine and ATP through an activated phospho-Asp-tRNA(Asn) or phospho-Glu-tRNA(Gln).</text>
</comment>
<comment type="catalytic activity">
    <reaction evidence="1">
        <text>L-glutamyl-tRNA(Gln) + L-glutamine + ATP + H2O = L-glutaminyl-tRNA(Gln) + L-glutamate + ADP + phosphate + H(+)</text>
        <dbReference type="Rhea" id="RHEA:17521"/>
        <dbReference type="Rhea" id="RHEA-COMP:9681"/>
        <dbReference type="Rhea" id="RHEA-COMP:9684"/>
        <dbReference type="ChEBI" id="CHEBI:15377"/>
        <dbReference type="ChEBI" id="CHEBI:15378"/>
        <dbReference type="ChEBI" id="CHEBI:29985"/>
        <dbReference type="ChEBI" id="CHEBI:30616"/>
        <dbReference type="ChEBI" id="CHEBI:43474"/>
        <dbReference type="ChEBI" id="CHEBI:58359"/>
        <dbReference type="ChEBI" id="CHEBI:78520"/>
        <dbReference type="ChEBI" id="CHEBI:78521"/>
        <dbReference type="ChEBI" id="CHEBI:456216"/>
    </reaction>
</comment>
<comment type="catalytic activity">
    <reaction evidence="1">
        <text>L-aspartyl-tRNA(Asn) + L-glutamine + ATP + H2O = L-asparaginyl-tRNA(Asn) + L-glutamate + ADP + phosphate + 2 H(+)</text>
        <dbReference type="Rhea" id="RHEA:14513"/>
        <dbReference type="Rhea" id="RHEA-COMP:9674"/>
        <dbReference type="Rhea" id="RHEA-COMP:9677"/>
        <dbReference type="ChEBI" id="CHEBI:15377"/>
        <dbReference type="ChEBI" id="CHEBI:15378"/>
        <dbReference type="ChEBI" id="CHEBI:29985"/>
        <dbReference type="ChEBI" id="CHEBI:30616"/>
        <dbReference type="ChEBI" id="CHEBI:43474"/>
        <dbReference type="ChEBI" id="CHEBI:58359"/>
        <dbReference type="ChEBI" id="CHEBI:78515"/>
        <dbReference type="ChEBI" id="CHEBI:78516"/>
        <dbReference type="ChEBI" id="CHEBI:456216"/>
    </reaction>
</comment>
<comment type="subunit">
    <text evidence="1">Heterotrimer of A, B and C subunits.</text>
</comment>
<comment type="similarity">
    <text evidence="1">Belongs to the GatB/GatE family. GatB subfamily.</text>
</comment>
<keyword id="KW-0067">ATP-binding</keyword>
<keyword id="KW-0436">Ligase</keyword>
<keyword id="KW-0547">Nucleotide-binding</keyword>
<keyword id="KW-0648">Protein biosynthesis</keyword>
<keyword id="KW-1185">Reference proteome</keyword>
<dbReference type="EC" id="6.3.5.-" evidence="1"/>
<dbReference type="EMBL" id="CP000284">
    <property type="protein sequence ID" value="ABE50753.1"/>
    <property type="molecule type" value="Genomic_DNA"/>
</dbReference>
<dbReference type="RefSeq" id="WP_011480706.1">
    <property type="nucleotide sequence ID" value="NC_007947.1"/>
</dbReference>
<dbReference type="SMR" id="Q1GYD4"/>
<dbReference type="STRING" id="265072.Mfla_2488"/>
<dbReference type="KEGG" id="mfa:Mfla_2488"/>
<dbReference type="eggNOG" id="COG0064">
    <property type="taxonomic scope" value="Bacteria"/>
</dbReference>
<dbReference type="HOGENOM" id="CLU_019240_1_1_4"/>
<dbReference type="OrthoDB" id="9804078at2"/>
<dbReference type="Proteomes" id="UP000002440">
    <property type="component" value="Chromosome"/>
</dbReference>
<dbReference type="GO" id="GO:0050566">
    <property type="term" value="F:asparaginyl-tRNA synthase (glutamine-hydrolyzing) activity"/>
    <property type="evidence" value="ECO:0007669"/>
    <property type="project" value="RHEA"/>
</dbReference>
<dbReference type="GO" id="GO:0005524">
    <property type="term" value="F:ATP binding"/>
    <property type="evidence" value="ECO:0007669"/>
    <property type="project" value="UniProtKB-KW"/>
</dbReference>
<dbReference type="GO" id="GO:0050567">
    <property type="term" value="F:glutaminyl-tRNA synthase (glutamine-hydrolyzing) activity"/>
    <property type="evidence" value="ECO:0007669"/>
    <property type="project" value="UniProtKB-UniRule"/>
</dbReference>
<dbReference type="GO" id="GO:0070681">
    <property type="term" value="P:glutaminyl-tRNAGln biosynthesis via transamidation"/>
    <property type="evidence" value="ECO:0007669"/>
    <property type="project" value="TreeGrafter"/>
</dbReference>
<dbReference type="GO" id="GO:0006412">
    <property type="term" value="P:translation"/>
    <property type="evidence" value="ECO:0007669"/>
    <property type="project" value="UniProtKB-UniRule"/>
</dbReference>
<dbReference type="FunFam" id="1.10.10.410:FF:000001">
    <property type="entry name" value="Aspartyl/glutamyl-tRNA(Asn/Gln) amidotransferase subunit B"/>
    <property type="match status" value="1"/>
</dbReference>
<dbReference type="FunFam" id="1.10.150.380:FF:000001">
    <property type="entry name" value="Aspartyl/glutamyl-tRNA(Asn/Gln) amidotransferase subunit B"/>
    <property type="match status" value="1"/>
</dbReference>
<dbReference type="Gene3D" id="1.10.10.410">
    <property type="match status" value="1"/>
</dbReference>
<dbReference type="Gene3D" id="1.10.150.380">
    <property type="entry name" value="GatB domain, N-terminal subdomain"/>
    <property type="match status" value="1"/>
</dbReference>
<dbReference type="HAMAP" id="MF_00121">
    <property type="entry name" value="GatB"/>
    <property type="match status" value="1"/>
</dbReference>
<dbReference type="InterPro" id="IPR017959">
    <property type="entry name" value="Asn/Gln-tRNA_amidoTrfase_suB/E"/>
</dbReference>
<dbReference type="InterPro" id="IPR006075">
    <property type="entry name" value="Asn/Gln-tRNA_Trfase_suB/E_cat"/>
</dbReference>
<dbReference type="InterPro" id="IPR018027">
    <property type="entry name" value="Asn/Gln_amidotransferase"/>
</dbReference>
<dbReference type="InterPro" id="IPR003789">
    <property type="entry name" value="Asn/Gln_tRNA_amidoTrase-B-like"/>
</dbReference>
<dbReference type="InterPro" id="IPR004413">
    <property type="entry name" value="GatB"/>
</dbReference>
<dbReference type="InterPro" id="IPR042114">
    <property type="entry name" value="GatB_C_1"/>
</dbReference>
<dbReference type="InterPro" id="IPR023168">
    <property type="entry name" value="GatB_Yqey_C_2"/>
</dbReference>
<dbReference type="InterPro" id="IPR017958">
    <property type="entry name" value="Gln-tRNA_amidoTrfase_suB_CS"/>
</dbReference>
<dbReference type="InterPro" id="IPR014746">
    <property type="entry name" value="Gln_synth/guanido_kin_cat_dom"/>
</dbReference>
<dbReference type="NCBIfam" id="TIGR00133">
    <property type="entry name" value="gatB"/>
    <property type="match status" value="1"/>
</dbReference>
<dbReference type="NCBIfam" id="NF004012">
    <property type="entry name" value="PRK05477.1-2"/>
    <property type="match status" value="1"/>
</dbReference>
<dbReference type="NCBIfam" id="NF004014">
    <property type="entry name" value="PRK05477.1-4"/>
    <property type="match status" value="1"/>
</dbReference>
<dbReference type="NCBIfam" id="NF004015">
    <property type="entry name" value="PRK05477.1-5"/>
    <property type="match status" value="1"/>
</dbReference>
<dbReference type="PANTHER" id="PTHR11659">
    <property type="entry name" value="GLUTAMYL-TRNA GLN AMIDOTRANSFERASE SUBUNIT B MITOCHONDRIAL AND PROKARYOTIC PET112-RELATED"/>
    <property type="match status" value="1"/>
</dbReference>
<dbReference type="PANTHER" id="PTHR11659:SF0">
    <property type="entry name" value="GLUTAMYL-TRNA(GLN) AMIDOTRANSFERASE SUBUNIT B, MITOCHONDRIAL"/>
    <property type="match status" value="1"/>
</dbReference>
<dbReference type="Pfam" id="PF02934">
    <property type="entry name" value="GatB_N"/>
    <property type="match status" value="1"/>
</dbReference>
<dbReference type="Pfam" id="PF02637">
    <property type="entry name" value="GatB_Yqey"/>
    <property type="match status" value="1"/>
</dbReference>
<dbReference type="SMART" id="SM00845">
    <property type="entry name" value="GatB_Yqey"/>
    <property type="match status" value="1"/>
</dbReference>
<dbReference type="SUPFAM" id="SSF89095">
    <property type="entry name" value="GatB/YqeY motif"/>
    <property type="match status" value="1"/>
</dbReference>
<dbReference type="SUPFAM" id="SSF55931">
    <property type="entry name" value="Glutamine synthetase/guanido kinase"/>
    <property type="match status" value="1"/>
</dbReference>
<dbReference type="PROSITE" id="PS01234">
    <property type="entry name" value="GATB"/>
    <property type="match status" value="1"/>
</dbReference>
<accession>Q1GYD4</accession>
<protein>
    <recommendedName>
        <fullName evidence="1">Aspartyl/glutamyl-tRNA(Asn/Gln) amidotransferase subunit B</fullName>
        <shortName evidence="1">Asp/Glu-ADT subunit B</shortName>
        <ecNumber evidence="1">6.3.5.-</ecNumber>
    </recommendedName>
</protein>
<sequence>MSWEVVIGLETHVQLNTRSKIFSGSSTAFGAEPNTQANVVDVALPGVLPVLNKEAVQCAIRFGLAVNAEIAPRSVFARKNYFYPDLPKGYQISQYELPVVGKGALTIQVGDTEKTIRITRAHLEEDAGKSMHGASPGQSGIDLNRAGTPLLEIVTEPDMRSAAEAVAYARKLHELVQWINICDGNMQEGSFRCDVNVSVRRKGQEKLGTRREIKNLNSFRFMQQAIEFETRWQIETLEDGGKIEQATVLFNPDTGETRAMRTKEEANDYRYFPDPDLLPLAISTEDIDAVRVTLPELPSAMKARFERDYGLSAYDASALTASRSVADYFTATLAEFGGEAKLVANWVMGGISAKLNEEGREITDAPVSPVLLAGLLKRIADNTISSKIAKDVFEAMWAGEGDADAIIERKGLKQVTDSGAIEAIVDEVLAANAAMVEEFRAGKEKAFNALVGQTMKASKGKANPAQVNEILKRKLAG</sequence>
<organism>
    <name type="scientific">Methylobacillus flagellatus (strain ATCC 51484 / DSM 6875 / VKM B-1610 / KT)</name>
    <dbReference type="NCBI Taxonomy" id="265072"/>
    <lineage>
        <taxon>Bacteria</taxon>
        <taxon>Pseudomonadati</taxon>
        <taxon>Pseudomonadota</taxon>
        <taxon>Betaproteobacteria</taxon>
        <taxon>Nitrosomonadales</taxon>
        <taxon>Methylophilaceae</taxon>
        <taxon>Methylobacillus</taxon>
    </lineage>
</organism>
<feature type="chain" id="PRO_1000015994" description="Aspartyl/glutamyl-tRNA(Asn/Gln) amidotransferase subunit B">
    <location>
        <begin position="1"/>
        <end position="477"/>
    </location>
</feature>
<name>GATB_METFK</name>
<evidence type="ECO:0000255" key="1">
    <source>
        <dbReference type="HAMAP-Rule" id="MF_00121"/>
    </source>
</evidence>